<reference key="1">
    <citation type="submission" date="1998-06" db="EMBL/GenBank/DDBJ databases">
        <title>Sequence of Streptococcus parasanguis recA gene.</title>
        <authorList>
            <person name="Froeliger E.H."/>
            <person name="Fives-Taylor P."/>
        </authorList>
    </citation>
    <scope>NUCLEOTIDE SEQUENCE [GENOMIC DNA]</scope>
    <source>
        <strain>FW213</strain>
    </source>
</reference>
<gene>
    <name evidence="1" type="primary">recA</name>
</gene>
<keyword id="KW-0067">ATP-binding</keyword>
<keyword id="KW-0963">Cytoplasm</keyword>
<keyword id="KW-0227">DNA damage</keyword>
<keyword id="KW-0233">DNA recombination</keyword>
<keyword id="KW-0234">DNA repair</keyword>
<keyword id="KW-0238">DNA-binding</keyword>
<keyword id="KW-0547">Nucleotide-binding</keyword>
<keyword id="KW-0742">SOS response</keyword>
<protein>
    <recommendedName>
        <fullName evidence="1">Protein RecA</fullName>
    </recommendedName>
    <alternativeName>
        <fullName evidence="1">Recombinase A</fullName>
    </alternativeName>
</protein>
<proteinExistence type="inferred from homology"/>
<comment type="function">
    <text evidence="1">Can catalyze the hydrolysis of ATP in the presence of single-stranded DNA, the ATP-dependent uptake of single-stranded DNA by duplex DNA, and the ATP-dependent hybridization of homologous single-stranded DNAs. It interacts with LexA causing its activation and leading to its autocatalytic cleavage.</text>
</comment>
<comment type="subcellular location">
    <subcellularLocation>
        <location evidence="1">Cytoplasm</location>
    </subcellularLocation>
</comment>
<comment type="similarity">
    <text evidence="1">Belongs to the RecA family.</text>
</comment>
<dbReference type="EMBL" id="AF069745">
    <property type="protein sequence ID" value="AAD04860.1"/>
    <property type="molecule type" value="Genomic_DNA"/>
</dbReference>
<dbReference type="SMR" id="O85502"/>
<dbReference type="GO" id="GO:0005829">
    <property type="term" value="C:cytosol"/>
    <property type="evidence" value="ECO:0007669"/>
    <property type="project" value="TreeGrafter"/>
</dbReference>
<dbReference type="GO" id="GO:0005524">
    <property type="term" value="F:ATP binding"/>
    <property type="evidence" value="ECO:0007669"/>
    <property type="project" value="UniProtKB-UniRule"/>
</dbReference>
<dbReference type="GO" id="GO:0016887">
    <property type="term" value="F:ATP hydrolysis activity"/>
    <property type="evidence" value="ECO:0007669"/>
    <property type="project" value="InterPro"/>
</dbReference>
<dbReference type="GO" id="GO:0140664">
    <property type="term" value="F:ATP-dependent DNA damage sensor activity"/>
    <property type="evidence" value="ECO:0007669"/>
    <property type="project" value="InterPro"/>
</dbReference>
<dbReference type="GO" id="GO:0003684">
    <property type="term" value="F:damaged DNA binding"/>
    <property type="evidence" value="ECO:0007669"/>
    <property type="project" value="UniProtKB-UniRule"/>
</dbReference>
<dbReference type="GO" id="GO:0003697">
    <property type="term" value="F:single-stranded DNA binding"/>
    <property type="evidence" value="ECO:0007669"/>
    <property type="project" value="UniProtKB-UniRule"/>
</dbReference>
<dbReference type="GO" id="GO:0006310">
    <property type="term" value="P:DNA recombination"/>
    <property type="evidence" value="ECO:0007669"/>
    <property type="project" value="UniProtKB-UniRule"/>
</dbReference>
<dbReference type="GO" id="GO:0006281">
    <property type="term" value="P:DNA repair"/>
    <property type="evidence" value="ECO:0007669"/>
    <property type="project" value="UniProtKB-UniRule"/>
</dbReference>
<dbReference type="GO" id="GO:0009432">
    <property type="term" value="P:SOS response"/>
    <property type="evidence" value="ECO:0007669"/>
    <property type="project" value="UniProtKB-UniRule"/>
</dbReference>
<dbReference type="CDD" id="cd00983">
    <property type="entry name" value="RecA"/>
    <property type="match status" value="1"/>
</dbReference>
<dbReference type="FunFam" id="3.40.50.300:FF:000087">
    <property type="entry name" value="Recombinase RecA"/>
    <property type="match status" value="1"/>
</dbReference>
<dbReference type="Gene3D" id="3.40.50.300">
    <property type="entry name" value="P-loop containing nucleotide triphosphate hydrolases"/>
    <property type="match status" value="1"/>
</dbReference>
<dbReference type="HAMAP" id="MF_00268">
    <property type="entry name" value="RecA"/>
    <property type="match status" value="1"/>
</dbReference>
<dbReference type="InterPro" id="IPR003593">
    <property type="entry name" value="AAA+_ATPase"/>
</dbReference>
<dbReference type="InterPro" id="IPR013765">
    <property type="entry name" value="DNA_recomb/repair_RecA"/>
</dbReference>
<dbReference type="InterPro" id="IPR020584">
    <property type="entry name" value="DNA_recomb/repair_RecA_CS"/>
</dbReference>
<dbReference type="InterPro" id="IPR027417">
    <property type="entry name" value="P-loop_NTPase"/>
</dbReference>
<dbReference type="InterPro" id="IPR049261">
    <property type="entry name" value="RecA-like_C"/>
</dbReference>
<dbReference type="InterPro" id="IPR049428">
    <property type="entry name" value="RecA-like_N"/>
</dbReference>
<dbReference type="InterPro" id="IPR020588">
    <property type="entry name" value="RecA_ATP-bd"/>
</dbReference>
<dbReference type="InterPro" id="IPR023400">
    <property type="entry name" value="RecA_C_sf"/>
</dbReference>
<dbReference type="InterPro" id="IPR020587">
    <property type="entry name" value="RecA_monomer-monomer_interface"/>
</dbReference>
<dbReference type="NCBIfam" id="TIGR02012">
    <property type="entry name" value="tigrfam_recA"/>
    <property type="match status" value="1"/>
</dbReference>
<dbReference type="PANTHER" id="PTHR45900:SF1">
    <property type="entry name" value="MITOCHONDRIAL DNA REPAIR PROTEIN RECA HOMOLOG-RELATED"/>
    <property type="match status" value="1"/>
</dbReference>
<dbReference type="PANTHER" id="PTHR45900">
    <property type="entry name" value="RECA"/>
    <property type="match status" value="1"/>
</dbReference>
<dbReference type="Pfam" id="PF00154">
    <property type="entry name" value="RecA"/>
    <property type="match status" value="1"/>
</dbReference>
<dbReference type="Pfam" id="PF21096">
    <property type="entry name" value="RecA_C"/>
    <property type="match status" value="1"/>
</dbReference>
<dbReference type="PRINTS" id="PR00142">
    <property type="entry name" value="RECA"/>
</dbReference>
<dbReference type="SMART" id="SM00382">
    <property type="entry name" value="AAA"/>
    <property type="match status" value="1"/>
</dbReference>
<dbReference type="SUPFAM" id="SSF52540">
    <property type="entry name" value="P-loop containing nucleoside triphosphate hydrolases"/>
    <property type="match status" value="1"/>
</dbReference>
<dbReference type="SUPFAM" id="SSF54752">
    <property type="entry name" value="RecA protein, C-terminal domain"/>
    <property type="match status" value="1"/>
</dbReference>
<dbReference type="PROSITE" id="PS00321">
    <property type="entry name" value="RECA_1"/>
    <property type="match status" value="1"/>
</dbReference>
<dbReference type="PROSITE" id="PS50162">
    <property type="entry name" value="RECA_2"/>
    <property type="match status" value="1"/>
</dbReference>
<dbReference type="PROSITE" id="PS50163">
    <property type="entry name" value="RECA_3"/>
    <property type="match status" value="1"/>
</dbReference>
<sequence>MAKKQKKLDDITKKFGDEREKALNDALKLIEKDFGKGSIMRLGERAEQKVQVMSSGSLALDIALGAGGYPKGRIIEIYGPESSGKTTVALHAVAQAQKEGGIAAFIDAEHALDPSYAAALGVNIDELLLSQPDSGEQGLEIAGKLIDSGAVDLVVVDSVAALVPRAEIDGDIGDSHVGLQARMMSQAMRKLGASINKTKTIAIFINQLREKVGVMFGNPETTPGGRALKFYASVRLDVRGNTQIKGTGDQKDTNVGKETKIKVVKNKVAPPFKEAMVEIMYGEGISRTGELVKIATDLDIIQKAGAWYSYNGEKIGQGSENAKKFLADHPEIFDEIDHKVRVHFGLIEKDEAVKSLDKTEEAAPVVEEVTLDLDDAIEIED</sequence>
<accession>O85502</accession>
<name>RECA_STRPA</name>
<organism>
    <name type="scientific">Streptococcus parasanguinis</name>
    <dbReference type="NCBI Taxonomy" id="1318"/>
    <lineage>
        <taxon>Bacteria</taxon>
        <taxon>Bacillati</taxon>
        <taxon>Bacillota</taxon>
        <taxon>Bacilli</taxon>
        <taxon>Lactobacillales</taxon>
        <taxon>Streptococcaceae</taxon>
        <taxon>Streptococcus</taxon>
    </lineage>
</organism>
<feature type="chain" id="PRO_0000122858" description="Protein RecA">
    <location>
        <begin position="1"/>
        <end position="381"/>
    </location>
</feature>
<feature type="binding site" evidence="1">
    <location>
        <begin position="79"/>
        <end position="86"/>
    </location>
    <ligand>
        <name>ATP</name>
        <dbReference type="ChEBI" id="CHEBI:30616"/>
    </ligand>
</feature>
<evidence type="ECO:0000255" key="1">
    <source>
        <dbReference type="HAMAP-Rule" id="MF_00268"/>
    </source>
</evidence>